<gene>
    <name evidence="1" type="primary">mdoC</name>
    <name evidence="1" type="synonym">opgC</name>
    <name type="ordered locus">Ecok1_09410</name>
    <name type="ORF">APECO1_132</name>
</gene>
<sequence>MNPVPAQREYFLDSIRAWLMLLGIPFHISLIYSSHTWHVNSAEPSLWLTLFNDFIHSFRMQVFFVISGYFSYMLFLRYPLKKWWKVRVERVGIPMLTAIPLLTLPQFIMLQYVKGKAESWPGLSLYDKYNTLAWELISHLWFLLVLVVMTTLCVWIFKRIRNNLENSDKTNKKFSMVKLSVIFLCLGIGYAVIRRTIFIVYPPILSNGMFNFIVMQTLFYLPFFILGALAFIFPHLKALFTTPSRGCTFAAALAFVAYLLNQRYGSGDAWMYETESVITMVLGLWMVNVVFSFGHRLLNFQSARVTYFVNASLFIYLVHHPLTLFFGAYITPHITSNWLGFLCGLIFVVGIAIILYEIHLRIPLLKFLFSGKPVVKRENDKAPAR</sequence>
<comment type="function">
    <text evidence="1">Necessary for the succinyl substitution of periplasmic glucans. Could catalyze the transfer of succinyl residues from the cytoplasmic side of the membrane to the nascent glucan backbones on the periplasmic side of the membrane.</text>
</comment>
<comment type="pathway">
    <text evidence="1">Glycan metabolism; osmoregulated periplasmic glucan (OPG) biosynthesis.</text>
</comment>
<comment type="subcellular location">
    <subcellularLocation>
        <location evidence="1">Cell membrane</location>
        <topology evidence="1">Multi-pass membrane protein</topology>
    </subcellularLocation>
</comment>
<comment type="similarity">
    <text evidence="1">Belongs to the acyltransferase 3 family. OpgC subfamily.</text>
</comment>
<dbReference type="EC" id="2.1.-.-" evidence="1"/>
<dbReference type="EMBL" id="CP000468">
    <property type="protein sequence ID" value="ABJ00435.1"/>
    <property type="molecule type" value="Genomic_DNA"/>
</dbReference>
<dbReference type="RefSeq" id="WP_001070346.1">
    <property type="nucleotide sequence ID" value="NZ_CADILS010000019.1"/>
</dbReference>
<dbReference type="KEGG" id="ecv:APECO1_132"/>
<dbReference type="HOGENOM" id="CLU_036182_2_0_6"/>
<dbReference type="UniPathway" id="UPA00637"/>
<dbReference type="Proteomes" id="UP000008216">
    <property type="component" value="Chromosome"/>
</dbReference>
<dbReference type="GO" id="GO:0005886">
    <property type="term" value="C:plasma membrane"/>
    <property type="evidence" value="ECO:0007669"/>
    <property type="project" value="UniProtKB-SubCell"/>
</dbReference>
<dbReference type="GO" id="GO:0016747">
    <property type="term" value="F:acyltransferase activity, transferring groups other than amino-acyl groups"/>
    <property type="evidence" value="ECO:0007669"/>
    <property type="project" value="InterPro"/>
</dbReference>
<dbReference type="GO" id="GO:0016741">
    <property type="term" value="F:transferase activity, transferring one-carbon groups"/>
    <property type="evidence" value="ECO:0007669"/>
    <property type="project" value="UniProtKB-UniRule"/>
</dbReference>
<dbReference type="GO" id="GO:0009250">
    <property type="term" value="P:glucan biosynthetic process"/>
    <property type="evidence" value="ECO:0007669"/>
    <property type="project" value="UniProtKB-UniRule"/>
</dbReference>
<dbReference type="HAMAP" id="MF_01066">
    <property type="entry name" value="MdoC_OpgC"/>
    <property type="match status" value="1"/>
</dbReference>
<dbReference type="InterPro" id="IPR002656">
    <property type="entry name" value="Acyl_transf_3_dom"/>
</dbReference>
<dbReference type="InterPro" id="IPR050623">
    <property type="entry name" value="Glucan_succinyl_AcylTrfase"/>
</dbReference>
<dbReference type="InterPro" id="IPR023723">
    <property type="entry name" value="Glucans_biosynth_C"/>
</dbReference>
<dbReference type="NCBIfam" id="NF003014">
    <property type="entry name" value="PRK03854.1"/>
    <property type="match status" value="1"/>
</dbReference>
<dbReference type="PANTHER" id="PTHR36927">
    <property type="entry name" value="BLR4337 PROTEIN"/>
    <property type="match status" value="1"/>
</dbReference>
<dbReference type="PANTHER" id="PTHR36927:SF3">
    <property type="entry name" value="GLUCANS BIOSYNTHESIS PROTEIN C"/>
    <property type="match status" value="1"/>
</dbReference>
<dbReference type="Pfam" id="PF01757">
    <property type="entry name" value="Acyl_transf_3"/>
    <property type="match status" value="1"/>
</dbReference>
<protein>
    <recommendedName>
        <fullName evidence="1">Glucans biosynthesis protein C</fullName>
        <ecNumber evidence="1">2.1.-.-</ecNumber>
    </recommendedName>
</protein>
<name>OPGC_ECOK1</name>
<feature type="chain" id="PRO_1000064512" description="Glucans biosynthesis protein C">
    <location>
        <begin position="1"/>
        <end position="385"/>
    </location>
</feature>
<feature type="transmembrane region" description="Helical" evidence="1">
    <location>
        <begin position="17"/>
        <end position="37"/>
    </location>
</feature>
<feature type="transmembrane region" description="Helical" evidence="1">
    <location>
        <begin position="60"/>
        <end position="80"/>
    </location>
</feature>
<feature type="transmembrane region" description="Helical" evidence="1">
    <location>
        <begin position="91"/>
        <end position="111"/>
    </location>
</feature>
<feature type="transmembrane region" description="Helical" evidence="1">
    <location>
        <begin position="137"/>
        <end position="157"/>
    </location>
</feature>
<feature type="transmembrane region" description="Helical" evidence="1">
    <location>
        <begin position="173"/>
        <end position="193"/>
    </location>
</feature>
<feature type="transmembrane region" description="Helical" evidence="1">
    <location>
        <begin position="212"/>
        <end position="232"/>
    </location>
</feature>
<feature type="transmembrane region" description="Helical" evidence="1">
    <location>
        <begin position="239"/>
        <end position="259"/>
    </location>
</feature>
<feature type="transmembrane region" description="Helical" evidence="1">
    <location>
        <begin position="274"/>
        <end position="294"/>
    </location>
</feature>
<feature type="transmembrane region" description="Helical" evidence="1">
    <location>
        <begin position="311"/>
        <end position="331"/>
    </location>
</feature>
<feature type="transmembrane region" description="Helical" evidence="1">
    <location>
        <begin position="338"/>
        <end position="358"/>
    </location>
</feature>
<evidence type="ECO:0000255" key="1">
    <source>
        <dbReference type="HAMAP-Rule" id="MF_01066"/>
    </source>
</evidence>
<accession>A1A9U5</accession>
<reference key="1">
    <citation type="journal article" date="2007" name="J. Bacteriol.">
        <title>The genome sequence of avian pathogenic Escherichia coli strain O1:K1:H7 shares strong similarities with human extraintestinal pathogenic E. coli genomes.</title>
        <authorList>
            <person name="Johnson T.J."/>
            <person name="Kariyawasam S."/>
            <person name="Wannemuehler Y."/>
            <person name="Mangiamele P."/>
            <person name="Johnson S.J."/>
            <person name="Doetkott C."/>
            <person name="Skyberg J.A."/>
            <person name="Lynne A.M."/>
            <person name="Johnson J.R."/>
            <person name="Nolan L.K."/>
        </authorList>
    </citation>
    <scope>NUCLEOTIDE SEQUENCE [LARGE SCALE GENOMIC DNA]</scope>
</reference>
<organism>
    <name type="scientific">Escherichia coli O1:K1 / APEC</name>
    <dbReference type="NCBI Taxonomy" id="405955"/>
    <lineage>
        <taxon>Bacteria</taxon>
        <taxon>Pseudomonadati</taxon>
        <taxon>Pseudomonadota</taxon>
        <taxon>Gammaproteobacteria</taxon>
        <taxon>Enterobacterales</taxon>
        <taxon>Enterobacteriaceae</taxon>
        <taxon>Escherichia</taxon>
    </lineage>
</organism>
<proteinExistence type="inferred from homology"/>
<keyword id="KW-0012">Acyltransferase</keyword>
<keyword id="KW-1003">Cell membrane</keyword>
<keyword id="KW-0472">Membrane</keyword>
<keyword id="KW-1185">Reference proteome</keyword>
<keyword id="KW-0808">Transferase</keyword>
<keyword id="KW-0812">Transmembrane</keyword>
<keyword id="KW-1133">Transmembrane helix</keyword>